<sequence length="849" mass="95341">MTKEKLSPGMQQYLDIKKDYPDAFLLFRMGDFYELFYDDAIKAAQILEISLTSRNKNADNPIPMAGVPYHSAQQYIDVLIDLGYKVAIAEQMEDPKKAVGVVKREVVQVITPGTVVDSTKPDSANNFLVSLDTDGSQFGLSYMDLSTGEFYATTLADLPAVRSEVLNLKTRELVIGFELSENEDQLFRKQMNLLLSFEKTVYDDVHLLDDQLKAIELAAAGKLLQYVHNTQKRELSHLQKLVHYEIKDYLQMAYATKSSLDLLENARSGKKHGSLYWLLDETKTAMGTRLLRTWIDRPLVSSSLISKRQDIIQTFLDHFFERSDLSDSLKGVYDIERLASRVSFGKANPKDLLQLGQTLSQVPVIKTILESFASSSLESLINQIDTLPELEALIRSAIDSNAPITITEGGMIREGFDETLDKYRTVMREGTSWIADIETKERQKSGISTLKIDYNKKDGYYFHVTNSNLSLVPDYFFRKATLKNSERFGTAELAKIEGEMLEAREESANLEYDIFMRIRSQVESYIERLQNLAKSLATVDVLQSLAVVAENNHYVRPSFNHQQEISIENGRHAVVEKVMGSQEYIPNTINFDQKTSIQLITGPNMSGKSTYMRQLALTVIMAQLGSFVAADSADLPIFDAIFTRIGAADDLISGQSTFMVEMMEANHAIKAATPNSLILFDELGRGTATYDGMALAQAIIEYIHNKVGAKTLFATHYHELTDLSTRLTSLVNVHVATLEKDGEVTFLHKIADGPADKSYGIHVAKIAGLPKDLLNRADHILVDLEKMSAAVSVNLKNETKESQPVEEQLSLFAIDNNYEELIKKLKQLDLTNLTPRESMNALFDLKELL</sequence>
<accession>Q8DRW8</accession>
<dbReference type="EMBL" id="AE014133">
    <property type="protein sequence ID" value="AAN59686.1"/>
    <property type="molecule type" value="Genomic_DNA"/>
</dbReference>
<dbReference type="RefSeq" id="NP_722380.1">
    <property type="nucleotide sequence ID" value="NC_004350.2"/>
</dbReference>
<dbReference type="RefSeq" id="WP_002279585.1">
    <property type="nucleotide sequence ID" value="NC_004350.2"/>
</dbReference>
<dbReference type="SMR" id="Q8DRW8"/>
<dbReference type="STRING" id="210007.SMU_2091c"/>
<dbReference type="KEGG" id="smu:SMU_2091c"/>
<dbReference type="PATRIC" id="fig|210007.7.peg.1861"/>
<dbReference type="eggNOG" id="COG0249">
    <property type="taxonomic scope" value="Bacteria"/>
</dbReference>
<dbReference type="HOGENOM" id="CLU_002472_3_1_9"/>
<dbReference type="OrthoDB" id="9802448at2"/>
<dbReference type="PhylomeDB" id="Q8DRW8"/>
<dbReference type="Proteomes" id="UP000002512">
    <property type="component" value="Chromosome"/>
</dbReference>
<dbReference type="GO" id="GO:0005829">
    <property type="term" value="C:cytosol"/>
    <property type="evidence" value="ECO:0007669"/>
    <property type="project" value="TreeGrafter"/>
</dbReference>
<dbReference type="GO" id="GO:0005524">
    <property type="term" value="F:ATP binding"/>
    <property type="evidence" value="ECO:0007669"/>
    <property type="project" value="UniProtKB-UniRule"/>
</dbReference>
<dbReference type="GO" id="GO:0140664">
    <property type="term" value="F:ATP-dependent DNA damage sensor activity"/>
    <property type="evidence" value="ECO:0007669"/>
    <property type="project" value="InterPro"/>
</dbReference>
<dbReference type="GO" id="GO:0003684">
    <property type="term" value="F:damaged DNA binding"/>
    <property type="evidence" value="ECO:0007669"/>
    <property type="project" value="UniProtKB-UniRule"/>
</dbReference>
<dbReference type="GO" id="GO:0030983">
    <property type="term" value="F:mismatched DNA binding"/>
    <property type="evidence" value="ECO:0007669"/>
    <property type="project" value="InterPro"/>
</dbReference>
<dbReference type="GO" id="GO:0006298">
    <property type="term" value="P:mismatch repair"/>
    <property type="evidence" value="ECO:0007669"/>
    <property type="project" value="UniProtKB-UniRule"/>
</dbReference>
<dbReference type="CDD" id="cd03284">
    <property type="entry name" value="ABC_MutS1"/>
    <property type="match status" value="1"/>
</dbReference>
<dbReference type="FunFam" id="1.10.1420.10:FF:000001">
    <property type="entry name" value="DNA mismatch repair protein MutS"/>
    <property type="match status" value="1"/>
</dbReference>
<dbReference type="FunFam" id="3.40.1170.10:FF:000001">
    <property type="entry name" value="DNA mismatch repair protein MutS"/>
    <property type="match status" value="1"/>
</dbReference>
<dbReference type="FunFam" id="3.40.50.300:FF:000896">
    <property type="entry name" value="DNA mismatch repair protein MutS"/>
    <property type="match status" value="1"/>
</dbReference>
<dbReference type="Gene3D" id="1.10.1420.10">
    <property type="match status" value="2"/>
</dbReference>
<dbReference type="Gene3D" id="3.40.1170.10">
    <property type="entry name" value="DNA repair protein MutS, domain I"/>
    <property type="match status" value="1"/>
</dbReference>
<dbReference type="Gene3D" id="3.30.420.110">
    <property type="entry name" value="MutS, connector domain"/>
    <property type="match status" value="1"/>
</dbReference>
<dbReference type="Gene3D" id="3.40.50.300">
    <property type="entry name" value="P-loop containing nucleotide triphosphate hydrolases"/>
    <property type="match status" value="1"/>
</dbReference>
<dbReference type="HAMAP" id="MF_00096">
    <property type="entry name" value="MutS"/>
    <property type="match status" value="1"/>
</dbReference>
<dbReference type="InterPro" id="IPR005748">
    <property type="entry name" value="DNA_mismatch_repair_MutS"/>
</dbReference>
<dbReference type="InterPro" id="IPR007695">
    <property type="entry name" value="DNA_mismatch_repair_MutS-lik_N"/>
</dbReference>
<dbReference type="InterPro" id="IPR017261">
    <property type="entry name" value="DNA_mismatch_repair_MutS/MSH"/>
</dbReference>
<dbReference type="InterPro" id="IPR000432">
    <property type="entry name" value="DNA_mismatch_repair_MutS_C"/>
</dbReference>
<dbReference type="InterPro" id="IPR007861">
    <property type="entry name" value="DNA_mismatch_repair_MutS_clamp"/>
</dbReference>
<dbReference type="InterPro" id="IPR007696">
    <property type="entry name" value="DNA_mismatch_repair_MutS_core"/>
</dbReference>
<dbReference type="InterPro" id="IPR016151">
    <property type="entry name" value="DNA_mismatch_repair_MutS_N"/>
</dbReference>
<dbReference type="InterPro" id="IPR036187">
    <property type="entry name" value="DNA_mismatch_repair_MutS_sf"/>
</dbReference>
<dbReference type="InterPro" id="IPR007860">
    <property type="entry name" value="DNA_mmatch_repair_MutS_con_dom"/>
</dbReference>
<dbReference type="InterPro" id="IPR045076">
    <property type="entry name" value="MutS"/>
</dbReference>
<dbReference type="InterPro" id="IPR036678">
    <property type="entry name" value="MutS_con_dom_sf"/>
</dbReference>
<dbReference type="InterPro" id="IPR027417">
    <property type="entry name" value="P-loop_NTPase"/>
</dbReference>
<dbReference type="NCBIfam" id="TIGR01070">
    <property type="entry name" value="mutS1"/>
    <property type="match status" value="1"/>
</dbReference>
<dbReference type="NCBIfam" id="NF003810">
    <property type="entry name" value="PRK05399.1"/>
    <property type="match status" value="1"/>
</dbReference>
<dbReference type="PANTHER" id="PTHR11361:SF34">
    <property type="entry name" value="DNA MISMATCH REPAIR PROTEIN MSH1, MITOCHONDRIAL"/>
    <property type="match status" value="1"/>
</dbReference>
<dbReference type="PANTHER" id="PTHR11361">
    <property type="entry name" value="DNA MISMATCH REPAIR PROTEIN MUTS FAMILY MEMBER"/>
    <property type="match status" value="1"/>
</dbReference>
<dbReference type="Pfam" id="PF01624">
    <property type="entry name" value="MutS_I"/>
    <property type="match status" value="1"/>
</dbReference>
<dbReference type="Pfam" id="PF05188">
    <property type="entry name" value="MutS_II"/>
    <property type="match status" value="1"/>
</dbReference>
<dbReference type="Pfam" id="PF05192">
    <property type="entry name" value="MutS_III"/>
    <property type="match status" value="1"/>
</dbReference>
<dbReference type="Pfam" id="PF05190">
    <property type="entry name" value="MutS_IV"/>
    <property type="match status" value="1"/>
</dbReference>
<dbReference type="Pfam" id="PF00488">
    <property type="entry name" value="MutS_V"/>
    <property type="match status" value="1"/>
</dbReference>
<dbReference type="PIRSF" id="PIRSF037677">
    <property type="entry name" value="DNA_mis_repair_Msh6"/>
    <property type="match status" value="1"/>
</dbReference>
<dbReference type="SMART" id="SM00534">
    <property type="entry name" value="MUTSac"/>
    <property type="match status" value="1"/>
</dbReference>
<dbReference type="SMART" id="SM00533">
    <property type="entry name" value="MUTSd"/>
    <property type="match status" value="1"/>
</dbReference>
<dbReference type="SUPFAM" id="SSF55271">
    <property type="entry name" value="DNA repair protein MutS, domain I"/>
    <property type="match status" value="1"/>
</dbReference>
<dbReference type="SUPFAM" id="SSF53150">
    <property type="entry name" value="DNA repair protein MutS, domain II"/>
    <property type="match status" value="1"/>
</dbReference>
<dbReference type="SUPFAM" id="SSF48334">
    <property type="entry name" value="DNA repair protein MutS, domain III"/>
    <property type="match status" value="1"/>
</dbReference>
<dbReference type="SUPFAM" id="SSF52540">
    <property type="entry name" value="P-loop containing nucleoside triphosphate hydrolases"/>
    <property type="match status" value="1"/>
</dbReference>
<dbReference type="PROSITE" id="PS00486">
    <property type="entry name" value="DNA_MISMATCH_REPAIR_2"/>
    <property type="match status" value="1"/>
</dbReference>
<comment type="function">
    <text evidence="1">This protein is involved in the repair of mismatches in DNA. It is possible that it carries out the mismatch recognition step. This protein has a weak ATPase activity.</text>
</comment>
<comment type="similarity">
    <text evidence="1">Belongs to the DNA mismatch repair MutS family.</text>
</comment>
<feature type="chain" id="PRO_0000115146" description="DNA mismatch repair protein MutS">
    <location>
        <begin position="1"/>
        <end position="849"/>
    </location>
</feature>
<feature type="binding site" evidence="1">
    <location>
        <begin position="602"/>
        <end position="609"/>
    </location>
    <ligand>
        <name>ATP</name>
        <dbReference type="ChEBI" id="CHEBI:30616"/>
    </ligand>
</feature>
<gene>
    <name evidence="1" type="primary">mutS</name>
    <name type="ordered locus">SMU_2091c</name>
</gene>
<organism>
    <name type="scientific">Streptococcus mutans serotype c (strain ATCC 700610 / UA159)</name>
    <dbReference type="NCBI Taxonomy" id="210007"/>
    <lineage>
        <taxon>Bacteria</taxon>
        <taxon>Bacillati</taxon>
        <taxon>Bacillota</taxon>
        <taxon>Bacilli</taxon>
        <taxon>Lactobacillales</taxon>
        <taxon>Streptococcaceae</taxon>
        <taxon>Streptococcus</taxon>
    </lineage>
</organism>
<reference key="1">
    <citation type="journal article" date="2002" name="Proc. Natl. Acad. Sci. U.S.A.">
        <title>Genome sequence of Streptococcus mutans UA159, a cariogenic dental pathogen.</title>
        <authorList>
            <person name="Ajdic D.J."/>
            <person name="McShan W.M."/>
            <person name="McLaughlin R.E."/>
            <person name="Savic G."/>
            <person name="Chang J."/>
            <person name="Carson M.B."/>
            <person name="Primeaux C."/>
            <person name="Tian R."/>
            <person name="Kenton S."/>
            <person name="Jia H.G."/>
            <person name="Lin S.P."/>
            <person name="Qian Y."/>
            <person name="Li S."/>
            <person name="Zhu H."/>
            <person name="Najar F.Z."/>
            <person name="Lai H."/>
            <person name="White J."/>
            <person name="Roe B.A."/>
            <person name="Ferretti J.J."/>
        </authorList>
    </citation>
    <scope>NUCLEOTIDE SEQUENCE [LARGE SCALE GENOMIC DNA]</scope>
    <source>
        <strain>ATCC 700610 / UA159</strain>
    </source>
</reference>
<evidence type="ECO:0000255" key="1">
    <source>
        <dbReference type="HAMAP-Rule" id="MF_00096"/>
    </source>
</evidence>
<keyword id="KW-0067">ATP-binding</keyword>
<keyword id="KW-0227">DNA damage</keyword>
<keyword id="KW-0234">DNA repair</keyword>
<keyword id="KW-0238">DNA-binding</keyword>
<keyword id="KW-0547">Nucleotide-binding</keyword>
<keyword id="KW-1185">Reference proteome</keyword>
<protein>
    <recommendedName>
        <fullName evidence="1">DNA mismatch repair protein MutS</fullName>
    </recommendedName>
</protein>
<proteinExistence type="inferred from homology"/>
<name>MUTS_STRMU</name>